<proteinExistence type="evidence at protein level"/>
<protein>
    <recommendedName>
        <fullName>Uncharacterized lipoprotein MG321 homolog</fullName>
    </recommendedName>
</protein>
<name>Y456_MYCPN</name>
<comment type="subcellular location">
    <subcellularLocation>
        <location evidence="1">Cell membrane</location>
        <topology evidence="1">Lipid-anchor</topology>
    </subcellularLocation>
</comment>
<evidence type="ECO:0000255" key="1">
    <source>
        <dbReference type="PROSITE-ProRule" id="PRU00303"/>
    </source>
</evidence>
<evidence type="ECO:0000256" key="2">
    <source>
        <dbReference type="SAM" id="MobiDB-lite"/>
    </source>
</evidence>
<organism>
    <name type="scientific">Mycoplasma pneumoniae (strain ATCC 29342 / M129 / Subtype 1)</name>
    <name type="common">Mycoplasmoides pneumoniae</name>
    <dbReference type="NCBI Taxonomy" id="272634"/>
    <lineage>
        <taxon>Bacteria</taxon>
        <taxon>Bacillati</taxon>
        <taxon>Mycoplasmatota</taxon>
        <taxon>Mycoplasmoidales</taxon>
        <taxon>Mycoplasmoidaceae</taxon>
        <taxon>Mycoplasmoides</taxon>
    </lineage>
</organism>
<gene>
    <name type="ordered locus">MPN_456</name>
    <name type="ORF">H08_orf1005</name>
    <name type="ORF">MP385</name>
</gene>
<reference key="1">
    <citation type="journal article" date="1996" name="Nucleic Acids Res.">
        <title>Complete sequence analysis of the genome of the bacterium Mycoplasma pneumoniae.</title>
        <authorList>
            <person name="Himmelreich R."/>
            <person name="Hilbert H."/>
            <person name="Plagens H."/>
            <person name="Pirkl E."/>
            <person name="Li B.-C."/>
            <person name="Herrmann R."/>
        </authorList>
    </citation>
    <scope>NUCLEOTIDE SEQUENCE [LARGE SCALE GENOMIC DNA]</scope>
    <source>
        <strain>ATCC 29342 / M129 / Subtype 1</strain>
    </source>
</reference>
<reference key="2">
    <citation type="journal article" date="2000" name="Electrophoresis">
        <title>Towards a two-dimensional proteome map of Mycoplasma pneumoniae.</title>
        <authorList>
            <person name="Regula J.T."/>
            <person name="Ueberle B."/>
            <person name="Boguth G."/>
            <person name="Goerg A."/>
            <person name="Schnoelzer M."/>
            <person name="Herrmann R."/>
            <person name="Frank R."/>
        </authorList>
    </citation>
    <scope>IDENTIFICATION BY MASS SPECTROMETRY</scope>
    <source>
        <strain>ATCC 29342 / M129 / Subtype 1</strain>
    </source>
</reference>
<sequence>MKFQRKYWGLLSTLGVSSAVALSACAAQARDVYVTSSASDLLKNNSVPMSMFNVSPTSSFFGSKYAGLTTYIATGSNKDDGVNVATQTQEKLVLELATSVKGYKKKDKATSSQKTSTNSSCTTTSSGTSTSGEDDWECIGEIKRQSSSNGQNNQQSKSITEEEKFQEISQKATRYEFAIDTGIKWVDNNGKPVKDASGNDVKLSSKDFERGFEAYILSSELRFNRNGYFIDLMGLDVKKTVGMTKKNGAQVQMKVASSDEKDGEEKTVKITDDAYNPEDYQSTDDSKFNVYLTSPFPFLLSMMSKEFFFPIPHTHPKVKAIKVGKDSPLVYNEKNGSKILDQTKTNFDGIYGGGVNAWRDTWSVGPYYVESFNQSQIVFKRNSEYDTHITPNLPKTREDNEKPIPTMINYFQPGATPEVFYSNYIAGGLSSAEVPYSQQEDARSRFAGTGDLRWVKVQKTAQSAQITYSSRPYVVEGETVKTNSNITETEAKFLYNSESEEALTIRAGINGLINWQNLAIILLPNSGDLNYSIVPFGIFKEKGKNGASVQQKAVSTTEGSDLMNDYYYKIEKEQRLGLIPQREGNYEKNKNVLESATVKINYYSSKATSGQAGAAASAAFAKNNNTSDNTQQNQTSSVEAKSVNVTKHSFVQALKKVGFSGSNPLHFNMKLGNSSLSANGVDYYNAVKQALTELGTADNGEKLIVPEIILGDAQGPTRNEWYIGLSSVLGFSSWSPDYDGVGTWLDAATQLNDQGGGDVITYSSGAHIVRTLLLAASQKDVHSKFTQKIDQQNTASTTSDVTVKKADSSQDSSKSNTEEEKWDDVTSADLFKDDPYVLKNFGDAKAQAAQRSTGSTTSGNGTQASLEFTKKALSLLKFLVDNGILDKEKVKEAIKDPNKYLGKRDKIENGTNKPSKNEDFIGYELKDIYKKAAQLNRFNSIWAEKDTDNAKFLITVVDSYFPVLPVPAAGLNETSPTLLKPWFQFRSAPSGNGTIRDYGFIPENK</sequence>
<keyword id="KW-1003">Cell membrane</keyword>
<keyword id="KW-0449">Lipoprotein</keyword>
<keyword id="KW-0472">Membrane</keyword>
<keyword id="KW-0564">Palmitate</keyword>
<keyword id="KW-1185">Reference proteome</keyword>
<keyword id="KW-0732">Signal</keyword>
<feature type="signal peptide" evidence="1">
    <location>
        <begin position="1"/>
        <end position="24"/>
    </location>
</feature>
<feature type="chain" id="PRO_0000014035" description="Uncharacterized lipoprotein MG321 homolog">
    <location>
        <begin position="25"/>
        <end position="1005"/>
    </location>
</feature>
<feature type="region of interest" description="Disordered" evidence="2">
    <location>
        <begin position="105"/>
        <end position="165"/>
    </location>
</feature>
<feature type="region of interest" description="Disordered" evidence="2">
    <location>
        <begin position="786"/>
        <end position="825"/>
    </location>
</feature>
<feature type="compositionally biased region" description="Low complexity" evidence="2">
    <location>
        <begin position="110"/>
        <end position="131"/>
    </location>
</feature>
<feature type="compositionally biased region" description="Low complexity" evidence="2">
    <location>
        <begin position="145"/>
        <end position="156"/>
    </location>
</feature>
<feature type="compositionally biased region" description="Polar residues" evidence="2">
    <location>
        <begin position="786"/>
        <end position="801"/>
    </location>
</feature>
<feature type="lipid moiety-binding region" description="N-palmitoyl cysteine" evidence="1">
    <location>
        <position position="25"/>
    </location>
</feature>
<feature type="lipid moiety-binding region" description="S-diacylglycerol cysteine" evidence="1">
    <location>
        <position position="25"/>
    </location>
</feature>
<dbReference type="EMBL" id="U00089">
    <property type="protein sequence ID" value="AAB96033.1"/>
    <property type="molecule type" value="Genomic_DNA"/>
</dbReference>
<dbReference type="PIR" id="S73711">
    <property type="entry name" value="S73711"/>
</dbReference>
<dbReference type="RefSeq" id="NP_110144.1">
    <property type="nucleotide sequence ID" value="NC_000912.1"/>
</dbReference>
<dbReference type="RefSeq" id="WP_010874812.1">
    <property type="nucleotide sequence ID" value="NZ_OU342337.1"/>
</dbReference>
<dbReference type="STRING" id="272634.MPN_456"/>
<dbReference type="EnsemblBacteria" id="AAB96033">
    <property type="protein sequence ID" value="AAB96033"/>
    <property type="gene ID" value="MPN_456"/>
</dbReference>
<dbReference type="KEGG" id="mpn:MPN_456"/>
<dbReference type="PATRIC" id="fig|272634.6.peg.493"/>
<dbReference type="HOGENOM" id="CLU_313491_0_0_14"/>
<dbReference type="OrthoDB" id="401010at2"/>
<dbReference type="BioCyc" id="MPNE272634:G1GJ3-738-MONOMER"/>
<dbReference type="Proteomes" id="UP000000808">
    <property type="component" value="Chromosome"/>
</dbReference>
<dbReference type="GO" id="GO:0005886">
    <property type="term" value="C:plasma membrane"/>
    <property type="evidence" value="ECO:0007669"/>
    <property type="project" value="UniProtKB-SubCell"/>
</dbReference>
<dbReference type="Gene3D" id="3.90.76.10">
    <property type="entry name" value="Dipeptide-binding Protein, Domain 1"/>
    <property type="match status" value="1"/>
</dbReference>
<dbReference type="InterPro" id="IPR035158">
    <property type="entry name" value="DUF5396"/>
</dbReference>
<dbReference type="Pfam" id="PF17374">
    <property type="entry name" value="DUF5396"/>
    <property type="match status" value="1"/>
</dbReference>
<dbReference type="SUPFAM" id="SSF53850">
    <property type="entry name" value="Periplasmic binding protein-like II"/>
    <property type="match status" value="1"/>
</dbReference>
<dbReference type="PROSITE" id="PS51257">
    <property type="entry name" value="PROKAR_LIPOPROTEIN"/>
    <property type="match status" value="1"/>
</dbReference>
<accession>P75327</accession>